<accession>Q82NI4</accession>
<keyword id="KW-0046">Antibiotic resistance</keyword>
<keyword id="KW-1003">Cell membrane</keyword>
<keyword id="KW-0133">Cell shape</keyword>
<keyword id="KW-0961">Cell wall biogenesis/degradation</keyword>
<keyword id="KW-0378">Hydrolase</keyword>
<keyword id="KW-0472">Membrane</keyword>
<keyword id="KW-0573">Peptidoglycan synthesis</keyword>
<keyword id="KW-1185">Reference proteome</keyword>
<keyword id="KW-0812">Transmembrane</keyword>
<keyword id="KW-1133">Transmembrane helix</keyword>
<reference key="1">
    <citation type="journal article" date="2001" name="Proc. Natl. Acad. Sci. U.S.A.">
        <title>Genome sequence of an industrial microorganism Streptomyces avermitilis: deducing the ability of producing secondary metabolites.</title>
        <authorList>
            <person name="Omura S."/>
            <person name="Ikeda H."/>
            <person name="Ishikawa J."/>
            <person name="Hanamoto A."/>
            <person name="Takahashi C."/>
            <person name="Shinose M."/>
            <person name="Takahashi Y."/>
            <person name="Horikawa H."/>
            <person name="Nakazawa H."/>
            <person name="Osonoe T."/>
            <person name="Kikuchi H."/>
            <person name="Shiba T."/>
            <person name="Sakaki Y."/>
            <person name="Hattori M."/>
        </authorList>
    </citation>
    <scope>NUCLEOTIDE SEQUENCE [LARGE SCALE GENOMIC DNA]</scope>
    <source>
        <strain>ATCC 31267 / DSM 46492 / JCM 5070 / NBRC 14893 / NCIMB 12804 / NRRL 8165 / MA-4680</strain>
    </source>
</reference>
<reference key="2">
    <citation type="journal article" date="2003" name="Nat. Biotechnol.">
        <title>Complete genome sequence and comparative analysis of the industrial microorganism Streptomyces avermitilis.</title>
        <authorList>
            <person name="Ikeda H."/>
            <person name="Ishikawa J."/>
            <person name="Hanamoto A."/>
            <person name="Shinose M."/>
            <person name="Kikuchi H."/>
            <person name="Shiba T."/>
            <person name="Sakaki Y."/>
            <person name="Hattori M."/>
            <person name="Omura S."/>
        </authorList>
    </citation>
    <scope>NUCLEOTIDE SEQUENCE [LARGE SCALE GENOMIC DNA]</scope>
    <source>
        <strain>ATCC 31267 / DSM 46492 / JCM 5070 / NBRC 14893 / NCIMB 12804 / NRRL 8165 / MA-4680</strain>
    </source>
</reference>
<name>UPPP1_STRAW</name>
<proteinExistence type="inferred from homology"/>
<protein>
    <recommendedName>
        <fullName evidence="1">Undecaprenyl-diphosphatase 1</fullName>
        <ecNumber evidence="1">3.6.1.27</ecNumber>
    </recommendedName>
    <alternativeName>
        <fullName evidence="1">Bacitracin resistance protein 1</fullName>
    </alternativeName>
    <alternativeName>
        <fullName evidence="1">Undecaprenyl pyrophosphate phosphatase 1</fullName>
    </alternativeName>
</protein>
<comment type="function">
    <text evidence="1">Catalyzes the dephosphorylation of undecaprenyl diphosphate (UPP). Confers resistance to bacitracin.</text>
</comment>
<comment type="catalytic activity">
    <reaction evidence="1">
        <text>di-trans,octa-cis-undecaprenyl diphosphate + H2O = di-trans,octa-cis-undecaprenyl phosphate + phosphate + H(+)</text>
        <dbReference type="Rhea" id="RHEA:28094"/>
        <dbReference type="ChEBI" id="CHEBI:15377"/>
        <dbReference type="ChEBI" id="CHEBI:15378"/>
        <dbReference type="ChEBI" id="CHEBI:43474"/>
        <dbReference type="ChEBI" id="CHEBI:58405"/>
        <dbReference type="ChEBI" id="CHEBI:60392"/>
        <dbReference type="EC" id="3.6.1.27"/>
    </reaction>
</comment>
<comment type="subcellular location">
    <subcellularLocation>
        <location evidence="1">Cell membrane</location>
        <topology evidence="1">Multi-pass membrane protein</topology>
    </subcellularLocation>
</comment>
<comment type="miscellaneous">
    <text>Bacitracin is thought to be involved in the inhibition of peptidoglycan synthesis by sequestering undecaprenyl diphosphate, thereby reducing the pool of lipid carrier available.</text>
</comment>
<comment type="similarity">
    <text evidence="1">Belongs to the UppP family.</text>
</comment>
<dbReference type="EC" id="3.6.1.27" evidence="1"/>
<dbReference type="EMBL" id="BA000030">
    <property type="protein sequence ID" value="BAC69029.1"/>
    <property type="molecule type" value="Genomic_DNA"/>
</dbReference>
<dbReference type="RefSeq" id="WP_010982757.1">
    <property type="nucleotide sequence ID" value="NZ_JZJK01000078.1"/>
</dbReference>
<dbReference type="SMR" id="Q82NI4"/>
<dbReference type="GeneID" id="41538417"/>
<dbReference type="KEGG" id="sma:SAVERM_1319"/>
<dbReference type="eggNOG" id="COG1968">
    <property type="taxonomic scope" value="Bacteria"/>
</dbReference>
<dbReference type="HOGENOM" id="CLU_060296_1_0_11"/>
<dbReference type="OrthoDB" id="9808289at2"/>
<dbReference type="Proteomes" id="UP000000428">
    <property type="component" value="Chromosome"/>
</dbReference>
<dbReference type="GO" id="GO:0005886">
    <property type="term" value="C:plasma membrane"/>
    <property type="evidence" value="ECO:0007669"/>
    <property type="project" value="UniProtKB-SubCell"/>
</dbReference>
<dbReference type="GO" id="GO:0050380">
    <property type="term" value="F:undecaprenyl-diphosphatase activity"/>
    <property type="evidence" value="ECO:0007669"/>
    <property type="project" value="UniProtKB-UniRule"/>
</dbReference>
<dbReference type="GO" id="GO:0071555">
    <property type="term" value="P:cell wall organization"/>
    <property type="evidence" value="ECO:0007669"/>
    <property type="project" value="UniProtKB-KW"/>
</dbReference>
<dbReference type="GO" id="GO:0009252">
    <property type="term" value="P:peptidoglycan biosynthetic process"/>
    <property type="evidence" value="ECO:0007669"/>
    <property type="project" value="UniProtKB-KW"/>
</dbReference>
<dbReference type="GO" id="GO:0008360">
    <property type="term" value="P:regulation of cell shape"/>
    <property type="evidence" value="ECO:0007669"/>
    <property type="project" value="UniProtKB-KW"/>
</dbReference>
<dbReference type="GO" id="GO:0046677">
    <property type="term" value="P:response to antibiotic"/>
    <property type="evidence" value="ECO:0007669"/>
    <property type="project" value="UniProtKB-UniRule"/>
</dbReference>
<dbReference type="HAMAP" id="MF_01006">
    <property type="entry name" value="Undec_diphosphatase"/>
    <property type="match status" value="1"/>
</dbReference>
<dbReference type="InterPro" id="IPR003824">
    <property type="entry name" value="UppP"/>
</dbReference>
<dbReference type="NCBIfam" id="NF001392">
    <property type="entry name" value="PRK00281.2-1"/>
    <property type="match status" value="1"/>
</dbReference>
<dbReference type="NCBIfam" id="TIGR00753">
    <property type="entry name" value="undec_PP_bacA"/>
    <property type="match status" value="1"/>
</dbReference>
<dbReference type="PANTHER" id="PTHR30622">
    <property type="entry name" value="UNDECAPRENYL-DIPHOSPHATASE"/>
    <property type="match status" value="1"/>
</dbReference>
<dbReference type="PANTHER" id="PTHR30622:SF3">
    <property type="entry name" value="UNDECAPRENYL-DIPHOSPHATASE"/>
    <property type="match status" value="1"/>
</dbReference>
<dbReference type="Pfam" id="PF02673">
    <property type="entry name" value="BacA"/>
    <property type="match status" value="1"/>
</dbReference>
<gene>
    <name evidence="1" type="primary">uppP1</name>
    <name type="synonym">bacA1</name>
    <name type="synonym">upk1</name>
    <name type="ordered locus">SAV_1319</name>
</gene>
<feature type="chain" id="PRO_0000151209" description="Undecaprenyl-diphosphatase 1">
    <location>
        <begin position="1"/>
        <end position="277"/>
    </location>
</feature>
<feature type="transmembrane region" description="Helical" evidence="1">
    <location>
        <begin position="46"/>
        <end position="66"/>
    </location>
</feature>
<feature type="transmembrane region" description="Helical" evidence="1">
    <location>
        <begin position="95"/>
        <end position="115"/>
    </location>
</feature>
<feature type="transmembrane region" description="Helical" evidence="1">
    <location>
        <begin position="119"/>
        <end position="139"/>
    </location>
</feature>
<feature type="transmembrane region" description="Helical" evidence="1">
    <location>
        <begin position="165"/>
        <end position="185"/>
    </location>
</feature>
<feature type="transmembrane region" description="Helical" evidence="1">
    <location>
        <begin position="191"/>
        <end position="211"/>
    </location>
</feature>
<feature type="transmembrane region" description="Helical" evidence="1">
    <location>
        <begin position="216"/>
        <end position="236"/>
    </location>
</feature>
<feature type="transmembrane region" description="Helical" evidence="1">
    <location>
        <begin position="256"/>
        <end position="276"/>
    </location>
</feature>
<evidence type="ECO:0000255" key="1">
    <source>
        <dbReference type="HAMAP-Rule" id="MF_01006"/>
    </source>
</evidence>
<organism>
    <name type="scientific">Streptomyces avermitilis (strain ATCC 31267 / DSM 46492 / JCM 5070 / NBRC 14893 / NCIMB 12804 / NRRL 8165 / MA-4680)</name>
    <dbReference type="NCBI Taxonomy" id="227882"/>
    <lineage>
        <taxon>Bacteria</taxon>
        <taxon>Bacillati</taxon>
        <taxon>Actinomycetota</taxon>
        <taxon>Actinomycetes</taxon>
        <taxon>Kitasatosporales</taxon>
        <taxon>Streptomycetaceae</taxon>
        <taxon>Streptomyces</taxon>
    </lineage>
</organism>
<sequence length="277" mass="29283">MSVINVGQAVVLGAVEGVTEFLPVSSTGHLKITEGLMGIPVDDNAVVGFSAVIQVGAIAAVLVYFFKDIVRIVSAWGRGLRNRDERHHHDYKFAWWVIYATIPIVIVGLAAKSLIEGPLASLWVVAASLIVGSGVMWAADQMGRHKRGEDDTSFKDAMLVGSSQILALLFPGFSRSGATMSTALILDLDRVAATRLSFFLGIPALTGAGLYELKDALGTGVGVAPLAVGTIVSFVVAYGSISWLLKFVAKHSFNAFVIYRIVIGVLLLGLLGTGVLS</sequence>